<name>T6F_TERSU</name>
<protein>
    <recommendedName>
        <fullName evidence="2">Teretoxin Tsu6.15</fullName>
    </recommendedName>
</protein>
<comment type="subcellular location">
    <subcellularLocation>
        <location evidence="4">Secreted</location>
    </subcellularLocation>
</comment>
<comment type="tissue specificity">
    <text evidence="4">Expressed by the venom duct.</text>
</comment>
<comment type="domain">
    <text>The cysteine framework is VI/VII (C-C-CC-C-C).</text>
</comment>
<comment type="PTM">
    <text evidence="3">Contains 3 disulfide bonds.</text>
</comment>
<comment type="similarity">
    <text>Belongs to the teretoxin M (TM) superfamily.</text>
</comment>
<feature type="signal peptide" evidence="1">
    <location>
        <begin position="1"/>
        <end position="21"/>
    </location>
</feature>
<feature type="propeptide" id="PRO_0000435064" evidence="3">
    <location>
        <begin position="22"/>
        <end position="47"/>
    </location>
</feature>
<feature type="chain" id="PRO_0000435065" description="Teretoxin Tsu6.15">
    <location>
        <begin position="48"/>
        <end position="78"/>
    </location>
</feature>
<keyword id="KW-1015">Disulfide bond</keyword>
<keyword id="KW-0964">Secreted</keyword>
<keyword id="KW-0732">Signal</keyword>
<keyword id="KW-0800">Toxin</keyword>
<dbReference type="SMR" id="P0DN49"/>
<dbReference type="GO" id="GO:0005576">
    <property type="term" value="C:extracellular region"/>
    <property type="evidence" value="ECO:0007669"/>
    <property type="project" value="UniProtKB-SubCell"/>
</dbReference>
<dbReference type="GO" id="GO:0090729">
    <property type="term" value="F:toxin activity"/>
    <property type="evidence" value="ECO:0007669"/>
    <property type="project" value="UniProtKB-KW"/>
</dbReference>
<evidence type="ECO:0000255" key="1"/>
<evidence type="ECO:0000303" key="2">
    <source>
    </source>
</evidence>
<evidence type="ECO:0000305" key="3"/>
<evidence type="ECO:0000305" key="4">
    <source>
    </source>
</evidence>
<reference key="1">
    <citation type="journal article" date="2015" name="Genome Biol. Evol.">
        <title>Molecular diversity and gene evolution of the venom arsenal of Terebridae predatory marine snails.</title>
        <authorList>
            <person name="Gorson J."/>
            <person name="Ramrattan G."/>
            <person name="Verdes A."/>
            <person name="Wright E.M."/>
            <person name="Kantor Y."/>
            <person name="Rajaram Srinivasan R."/>
            <person name="Musunuri R."/>
            <person name="Packer D."/>
            <person name="Albano G."/>
            <person name="Qiu W.G."/>
            <person name="Holford M."/>
        </authorList>
    </citation>
    <scope>NUCLEOTIDE SEQUENCE [MRNA]</scope>
    <source>
        <tissue>Venom duct</tissue>
    </source>
</reference>
<proteinExistence type="inferred from homology"/>
<accession>P0DN49</accession>
<sequence length="78" mass="8630">MATSGRLLCFCLVLGLVFESLGYSEARPPRDRKRTVTAKRYDPLAQRVDCGGSPCAFGCCENDVCRELDCEYAPPFGF</sequence>
<organism>
    <name type="scientific">Terebra subulata</name>
    <name type="common">Chocolate spotted auger</name>
    <name type="synonym">Buccinum subulatum</name>
    <dbReference type="NCBI Taxonomy" id="89435"/>
    <lineage>
        <taxon>Eukaryota</taxon>
        <taxon>Metazoa</taxon>
        <taxon>Spiralia</taxon>
        <taxon>Lophotrochozoa</taxon>
        <taxon>Mollusca</taxon>
        <taxon>Gastropoda</taxon>
        <taxon>Caenogastropoda</taxon>
        <taxon>Neogastropoda</taxon>
        <taxon>Conoidea</taxon>
        <taxon>Terebridae</taxon>
        <taxon>Terebra</taxon>
    </lineage>
</organism>